<keyword id="KW-0238">DNA-binding</keyword>
<keyword id="KW-0479">Metal-binding</keyword>
<keyword id="KW-0539">Nucleus</keyword>
<keyword id="KW-1185">Reference proteome</keyword>
<keyword id="KW-0804">Transcription</keyword>
<keyword id="KW-0805">Transcription regulation</keyword>
<keyword id="KW-0862">Zinc</keyword>
<keyword id="KW-0863">Zinc-finger</keyword>
<gene>
    <name evidence="5" type="primary">DOF5</name>
    <name evidence="8" type="ordered locus">Os01g0758200</name>
    <name evidence="6" type="ordered locus">LOC_Os01g55340</name>
    <name evidence="7" type="ORF">B1131G08.10</name>
</gene>
<feature type="chain" id="PRO_0000441231" description="Dof zinc finger protein 5">
    <location>
        <begin position="1"/>
        <end position="211"/>
    </location>
</feature>
<feature type="zinc finger region" description="Dof-type" evidence="2">
    <location>
        <begin position="109"/>
        <end position="163"/>
    </location>
</feature>
<feature type="region of interest" description="Disordered" evidence="3">
    <location>
        <begin position="37"/>
        <end position="101"/>
    </location>
</feature>
<feature type="region of interest" description="Disordered" evidence="3">
    <location>
        <begin position="191"/>
        <end position="211"/>
    </location>
</feature>
<feature type="compositionally biased region" description="Basic and acidic residues" evidence="3">
    <location>
        <begin position="68"/>
        <end position="80"/>
    </location>
</feature>
<feature type="binding site" evidence="2">
    <location>
        <position position="111"/>
    </location>
    <ligand>
        <name>Zn(2+)</name>
        <dbReference type="ChEBI" id="CHEBI:29105"/>
    </ligand>
</feature>
<feature type="binding site" evidence="2">
    <location>
        <position position="114"/>
    </location>
    <ligand>
        <name>Zn(2+)</name>
        <dbReference type="ChEBI" id="CHEBI:29105"/>
    </ligand>
</feature>
<feature type="binding site" evidence="2">
    <location>
        <position position="136"/>
    </location>
    <ligand>
        <name>Zn(2+)</name>
        <dbReference type="ChEBI" id="CHEBI:29105"/>
    </ligand>
</feature>
<feature type="binding site" evidence="2">
    <location>
        <position position="139"/>
    </location>
    <ligand>
        <name>Zn(2+)</name>
        <dbReference type="ChEBI" id="CHEBI:29105"/>
    </ligand>
</feature>
<reference key="1">
    <citation type="online journal article" date="1999" name="Plant Gene Register">
        <title>Molecular analysis of rice cDNAs encoding Dof proteins in germinated aleurone cells.</title>
        <authorList>
            <person name="Washio K."/>
        </authorList>
        <locator>PGR99-107</locator>
    </citation>
    <scope>NUCLEOTIDE SEQUENCE [MRNA]</scope>
    <source>
        <strain>cv. Yukihikari</strain>
        <tissue>Aleurone</tissue>
    </source>
</reference>
<reference key="2">
    <citation type="submission" date="2011-01" db="EMBL/GenBank/DDBJ databases">
        <title>Rice transcription factor ORFeome collection.</title>
        <authorList>
            <person name="Gray J."/>
            <person name="Li T."/>
            <person name="Sun X."/>
            <person name="Wang G."/>
            <person name="Grotewold E."/>
        </authorList>
    </citation>
    <scope>NUCLEOTIDE SEQUENCE [MRNA]</scope>
    <source>
        <strain>cv. Nipponbare</strain>
    </source>
</reference>
<reference key="3">
    <citation type="journal article" date="2002" name="Nature">
        <title>The genome sequence and structure of rice chromosome 1.</title>
        <authorList>
            <person name="Sasaki T."/>
            <person name="Matsumoto T."/>
            <person name="Yamamoto K."/>
            <person name="Sakata K."/>
            <person name="Baba T."/>
            <person name="Katayose Y."/>
            <person name="Wu J."/>
            <person name="Niimura Y."/>
            <person name="Cheng Z."/>
            <person name="Nagamura Y."/>
            <person name="Antonio B.A."/>
            <person name="Kanamori H."/>
            <person name="Hosokawa S."/>
            <person name="Masukawa M."/>
            <person name="Arikawa K."/>
            <person name="Chiden Y."/>
            <person name="Hayashi M."/>
            <person name="Okamoto M."/>
            <person name="Ando T."/>
            <person name="Aoki H."/>
            <person name="Arita K."/>
            <person name="Hamada M."/>
            <person name="Harada C."/>
            <person name="Hijishita S."/>
            <person name="Honda M."/>
            <person name="Ichikawa Y."/>
            <person name="Idonuma A."/>
            <person name="Iijima M."/>
            <person name="Ikeda M."/>
            <person name="Ikeno M."/>
            <person name="Ito S."/>
            <person name="Ito T."/>
            <person name="Ito Y."/>
            <person name="Ito Y."/>
            <person name="Iwabuchi A."/>
            <person name="Kamiya K."/>
            <person name="Karasawa W."/>
            <person name="Katagiri S."/>
            <person name="Kikuta A."/>
            <person name="Kobayashi N."/>
            <person name="Kono I."/>
            <person name="Machita K."/>
            <person name="Maehara T."/>
            <person name="Mizuno H."/>
            <person name="Mizubayashi T."/>
            <person name="Mukai Y."/>
            <person name="Nagasaki H."/>
            <person name="Nakashima M."/>
            <person name="Nakama Y."/>
            <person name="Nakamichi Y."/>
            <person name="Nakamura M."/>
            <person name="Namiki N."/>
            <person name="Negishi M."/>
            <person name="Ohta I."/>
            <person name="Ono N."/>
            <person name="Saji S."/>
            <person name="Sakai K."/>
            <person name="Shibata M."/>
            <person name="Shimokawa T."/>
            <person name="Shomura A."/>
            <person name="Song J."/>
            <person name="Takazaki Y."/>
            <person name="Terasawa K."/>
            <person name="Tsuji K."/>
            <person name="Waki K."/>
            <person name="Yamagata H."/>
            <person name="Yamane H."/>
            <person name="Yoshiki S."/>
            <person name="Yoshihara R."/>
            <person name="Yukawa K."/>
            <person name="Zhong H."/>
            <person name="Iwama H."/>
            <person name="Endo T."/>
            <person name="Ito H."/>
            <person name="Hahn J.H."/>
            <person name="Kim H.-I."/>
            <person name="Eun M.-Y."/>
            <person name="Yano M."/>
            <person name="Jiang J."/>
            <person name="Gojobori T."/>
        </authorList>
    </citation>
    <scope>NUCLEOTIDE SEQUENCE [LARGE SCALE GENOMIC DNA]</scope>
    <source>
        <strain>cv. Nipponbare</strain>
    </source>
</reference>
<reference key="4">
    <citation type="journal article" date="2005" name="Nature">
        <title>The map-based sequence of the rice genome.</title>
        <authorList>
            <consortium name="International rice genome sequencing project (IRGSP)"/>
        </authorList>
    </citation>
    <scope>NUCLEOTIDE SEQUENCE [LARGE SCALE GENOMIC DNA]</scope>
    <source>
        <strain>cv. Nipponbare</strain>
    </source>
</reference>
<reference key="5">
    <citation type="journal article" date="2008" name="Nucleic Acids Res.">
        <title>The rice annotation project database (RAP-DB): 2008 update.</title>
        <authorList>
            <consortium name="The rice annotation project (RAP)"/>
        </authorList>
    </citation>
    <scope>GENOME REANNOTATION</scope>
    <source>
        <strain>cv. Nipponbare</strain>
    </source>
</reference>
<reference key="6">
    <citation type="journal article" date="2013" name="Rice">
        <title>Improvement of the Oryza sativa Nipponbare reference genome using next generation sequence and optical map data.</title>
        <authorList>
            <person name="Kawahara Y."/>
            <person name="de la Bastide M."/>
            <person name="Hamilton J.P."/>
            <person name="Kanamori H."/>
            <person name="McCombie W.R."/>
            <person name="Ouyang S."/>
            <person name="Schwartz D.C."/>
            <person name="Tanaka T."/>
            <person name="Wu J."/>
            <person name="Zhou S."/>
            <person name="Childs K.L."/>
            <person name="Davidson R.M."/>
            <person name="Lin H."/>
            <person name="Quesada-Ocampo L."/>
            <person name="Vaillancourt B."/>
            <person name="Sakai H."/>
            <person name="Lee S.S."/>
            <person name="Kim J."/>
            <person name="Numa H."/>
            <person name="Itoh T."/>
            <person name="Buell C.R."/>
            <person name="Matsumoto T."/>
        </authorList>
    </citation>
    <scope>GENOME REANNOTATION</scope>
    <source>
        <strain>cv. Nipponbare</strain>
    </source>
</reference>
<reference key="7">
    <citation type="journal article" date="2003" name="Science">
        <title>Collection, mapping, and annotation of over 28,000 cDNA clones from japonica rice.</title>
        <authorList>
            <consortium name="The rice full-length cDNA consortium"/>
        </authorList>
    </citation>
    <scope>NUCLEOTIDE SEQUENCE [LARGE SCALE MRNA]</scope>
    <source>
        <strain>cv. Nipponbare</strain>
    </source>
</reference>
<reference key="8">
    <citation type="submission" date="2009-05" db="EMBL/GenBank/DDBJ databases">
        <title>Oryza sativa japonica group Dof-type zinc finger protein 20 gene, partial cds.</title>
        <authorList>
            <person name="Gaur V.S."/>
            <person name="Singh U.S."/>
            <person name="Singh V.K."/>
            <person name="Kumar A."/>
        </authorList>
    </citation>
    <scope>NUCLEOTIDE SEQUENCE [MRNA] OF 34-147</scope>
    <source>
        <strain>cv. Nipponbare</strain>
    </source>
</reference>
<reference key="9">
    <citation type="journal article" date="2001" name="Biochim. Biophys. Acta">
        <title>Identification of Dof proteins with implication in the gibberellin-regulated expression of a peptidase gene following the germination of rice grains.</title>
        <authorList>
            <person name="Washio K."/>
        </authorList>
    </citation>
    <scope>DEVELOPMENTAL STAGE</scope>
</reference>
<organism>
    <name type="scientific">Oryza sativa subsp. japonica</name>
    <name type="common">Rice</name>
    <dbReference type="NCBI Taxonomy" id="39947"/>
    <lineage>
        <taxon>Eukaryota</taxon>
        <taxon>Viridiplantae</taxon>
        <taxon>Streptophyta</taxon>
        <taxon>Embryophyta</taxon>
        <taxon>Tracheophyta</taxon>
        <taxon>Spermatophyta</taxon>
        <taxon>Magnoliopsida</taxon>
        <taxon>Liliopsida</taxon>
        <taxon>Poales</taxon>
        <taxon>Poaceae</taxon>
        <taxon>BOP clade</taxon>
        <taxon>Oryzoideae</taxon>
        <taxon>Oryzeae</taxon>
        <taxon>Oryzinae</taxon>
        <taxon>Oryza</taxon>
        <taxon>Oryza sativa</taxon>
    </lineage>
</organism>
<evidence type="ECO:0000250" key="1">
    <source>
        <dbReference type="UniProtKB" id="Q6K537"/>
    </source>
</evidence>
<evidence type="ECO:0000255" key="2">
    <source>
        <dbReference type="PROSITE-ProRule" id="PRU00071"/>
    </source>
</evidence>
<evidence type="ECO:0000256" key="3">
    <source>
        <dbReference type="SAM" id="MobiDB-lite"/>
    </source>
</evidence>
<evidence type="ECO:0000269" key="4">
    <source>
    </source>
</evidence>
<evidence type="ECO:0000303" key="5">
    <source ref="1"/>
</evidence>
<evidence type="ECO:0000305" key="6"/>
<evidence type="ECO:0000312" key="7">
    <source>
        <dbReference type="EMBL" id="BAD87583.1"/>
    </source>
</evidence>
<evidence type="ECO:0000312" key="8">
    <source>
        <dbReference type="EMBL" id="BAF06214.1"/>
    </source>
</evidence>
<dbReference type="EMBL" id="AB028133">
    <property type="protein sequence ID" value="BAA78576.1"/>
    <property type="status" value="ALT_SEQ"/>
    <property type="molecule type" value="mRNA"/>
</dbReference>
<dbReference type="EMBL" id="HQ858825">
    <property type="protein sequence ID" value="ADX60237.1"/>
    <property type="molecule type" value="mRNA"/>
</dbReference>
<dbReference type="EMBL" id="AP003409">
    <property type="protein sequence ID" value="BAD87583.1"/>
    <property type="molecule type" value="Genomic_DNA"/>
</dbReference>
<dbReference type="EMBL" id="AP008207">
    <property type="protein sequence ID" value="BAF06214.1"/>
    <property type="molecule type" value="Genomic_DNA"/>
</dbReference>
<dbReference type="EMBL" id="AP014957">
    <property type="protein sequence ID" value="BAS74425.1"/>
    <property type="molecule type" value="Genomic_DNA"/>
</dbReference>
<dbReference type="EMBL" id="AK071083">
    <property type="protein sequence ID" value="BAG92299.1"/>
    <property type="molecule type" value="mRNA"/>
</dbReference>
<dbReference type="EMBL" id="GQ183549">
    <property type="protein sequence ID" value="ACT83312.1"/>
    <property type="molecule type" value="Genomic_DNA"/>
</dbReference>
<dbReference type="RefSeq" id="XP_015630447.1">
    <property type="nucleotide sequence ID" value="XM_015774961.1"/>
</dbReference>
<dbReference type="FunCoup" id="Q5JLR7">
    <property type="interactions" value="51"/>
</dbReference>
<dbReference type="STRING" id="39947.Q5JLR7"/>
<dbReference type="PaxDb" id="39947-Q5JLR7"/>
<dbReference type="EnsemblPlants" id="Os01t0758200-01">
    <property type="protein sequence ID" value="Os01t0758200-01"/>
    <property type="gene ID" value="Os01g0758200"/>
</dbReference>
<dbReference type="Gramene" id="Os01t0758200-01">
    <property type="protein sequence ID" value="Os01t0758200-01"/>
    <property type="gene ID" value="Os01g0758200"/>
</dbReference>
<dbReference type="KEGG" id="dosa:Os01g0758200"/>
<dbReference type="eggNOG" id="ENOG502R885">
    <property type="taxonomic scope" value="Eukaryota"/>
</dbReference>
<dbReference type="HOGENOM" id="CLU_078374_0_0_1"/>
<dbReference type="InParanoid" id="Q5JLR7"/>
<dbReference type="OMA" id="AERWPVC"/>
<dbReference type="OrthoDB" id="1927254at2759"/>
<dbReference type="Proteomes" id="UP000000763">
    <property type="component" value="Chromosome 1"/>
</dbReference>
<dbReference type="Proteomes" id="UP000059680">
    <property type="component" value="Chromosome 1"/>
</dbReference>
<dbReference type="GO" id="GO:0005634">
    <property type="term" value="C:nucleus"/>
    <property type="evidence" value="ECO:0007669"/>
    <property type="project" value="UniProtKB-SubCell"/>
</dbReference>
<dbReference type="GO" id="GO:0003677">
    <property type="term" value="F:DNA binding"/>
    <property type="evidence" value="ECO:0000318"/>
    <property type="project" value="GO_Central"/>
</dbReference>
<dbReference type="GO" id="GO:0003700">
    <property type="term" value="F:DNA-binding transcription factor activity"/>
    <property type="evidence" value="ECO:0000318"/>
    <property type="project" value="GO_Central"/>
</dbReference>
<dbReference type="GO" id="GO:0008270">
    <property type="term" value="F:zinc ion binding"/>
    <property type="evidence" value="ECO:0007669"/>
    <property type="project" value="UniProtKB-KW"/>
</dbReference>
<dbReference type="InterPro" id="IPR045174">
    <property type="entry name" value="Dof"/>
</dbReference>
<dbReference type="InterPro" id="IPR003851">
    <property type="entry name" value="Znf_Dof"/>
</dbReference>
<dbReference type="PANTHER" id="PTHR31089">
    <property type="entry name" value="CYCLIC DOF FACTOR 2"/>
    <property type="match status" value="1"/>
</dbReference>
<dbReference type="PANTHER" id="PTHR31089:SF22">
    <property type="entry name" value="CYCLIC DOF FACTOR 4"/>
    <property type="match status" value="1"/>
</dbReference>
<dbReference type="Pfam" id="PF02701">
    <property type="entry name" value="Zn_ribbon_Dof"/>
    <property type="match status" value="1"/>
</dbReference>
<dbReference type="PROSITE" id="PS01361">
    <property type="entry name" value="ZF_DOF_1"/>
    <property type="match status" value="1"/>
</dbReference>
<dbReference type="PROSITE" id="PS50884">
    <property type="entry name" value="ZF_DOF_2"/>
    <property type="match status" value="1"/>
</dbReference>
<accession>Q5JLR7</accession>
<accession>C7DQF3</accession>
<accession>Q9SXG4</accession>
<name>DOF5_ORYSJ</name>
<proteinExistence type="evidence at transcript level"/>
<sequence>MLSHVEMAPAAGGFKLFGKVIMQCGVSEGTQDKAQGFVVAREKVEPEEEEEEEQRVPAAATSGQRASIKREAADRDEEQRQGGGDAAGQPTQRRLQDSAEARAAAAAPLPCPRCRSRDTKFCYFNNYNVNQPRHFCKACHRYWTAGGALRNVPVGAGRRKNRPLGPLAVAHHNHHHRAAAGFVLGFPNPSSPTSPSPVYTDRWPVTPDRPF</sequence>
<protein>
    <recommendedName>
        <fullName evidence="6">Dof zinc finger protein 5</fullName>
        <shortName evidence="5">OsDof5</shortName>
    </recommendedName>
</protein>
<comment type="function">
    <text evidence="1">Transcription factor that may transactivate seed storage protein genes in developing seeds.</text>
</comment>
<comment type="subcellular location">
    <subcellularLocation>
        <location evidence="2">Nucleus</location>
    </subcellularLocation>
</comment>
<comment type="developmental stage">
    <text evidence="4">Expressed in germinating seeds 3 to 5 days after imbibition.</text>
</comment>
<comment type="sequence caution" evidence="6">
    <conflict type="miscellaneous discrepancy">
        <sequence resource="EMBL-CDS" id="BAA78576"/>
    </conflict>
    <text>Sequencing errors.</text>
</comment>